<keyword id="KW-0963">Cytoplasm</keyword>
<keyword id="KW-0238">DNA-binding</keyword>
<keyword id="KW-1185">Reference proteome</keyword>
<name>Y1459_CHRSD</name>
<accession>Q1QXJ6</accession>
<organism>
    <name type="scientific">Chromohalobacter salexigens (strain ATCC BAA-138 / DSM 3043 / CIP 106854 / NCIMB 13768 / 1H11)</name>
    <dbReference type="NCBI Taxonomy" id="290398"/>
    <lineage>
        <taxon>Bacteria</taxon>
        <taxon>Pseudomonadati</taxon>
        <taxon>Pseudomonadota</taxon>
        <taxon>Gammaproteobacteria</taxon>
        <taxon>Oceanospirillales</taxon>
        <taxon>Halomonadaceae</taxon>
        <taxon>Chromohalobacter</taxon>
    </lineage>
</organism>
<feature type="chain" id="PRO_1000003724" description="Nucleoid-associated protein Csal_1459">
    <location>
        <begin position="1"/>
        <end position="108"/>
    </location>
</feature>
<feature type="region of interest" description="Disordered" evidence="2">
    <location>
        <begin position="84"/>
        <end position="108"/>
    </location>
</feature>
<feature type="compositionally biased region" description="Basic and acidic residues" evidence="2">
    <location>
        <begin position="84"/>
        <end position="93"/>
    </location>
</feature>
<gene>
    <name type="ordered locus">Csal_1459</name>
</gene>
<protein>
    <recommendedName>
        <fullName evidence="1">Nucleoid-associated protein Csal_1459</fullName>
    </recommendedName>
</protein>
<reference key="1">
    <citation type="journal article" date="2011" name="Stand. Genomic Sci.">
        <title>Complete genome sequence of the halophilic and highly halotolerant Chromohalobacter salexigens type strain (1H11(T)).</title>
        <authorList>
            <person name="Copeland A."/>
            <person name="O'Connor K."/>
            <person name="Lucas S."/>
            <person name="Lapidus A."/>
            <person name="Berry K.W."/>
            <person name="Detter J.C."/>
            <person name="Del Rio T.G."/>
            <person name="Hammon N."/>
            <person name="Dalin E."/>
            <person name="Tice H."/>
            <person name="Pitluck S."/>
            <person name="Bruce D."/>
            <person name="Goodwin L."/>
            <person name="Han C."/>
            <person name="Tapia R."/>
            <person name="Saunders E."/>
            <person name="Schmutz J."/>
            <person name="Brettin T."/>
            <person name="Larimer F."/>
            <person name="Land M."/>
            <person name="Hauser L."/>
            <person name="Vargas C."/>
            <person name="Nieto J.J."/>
            <person name="Kyrpides N.C."/>
            <person name="Ivanova N."/>
            <person name="Goker M."/>
            <person name="Klenk H.P."/>
            <person name="Csonka L.N."/>
            <person name="Woyke T."/>
        </authorList>
    </citation>
    <scope>NUCLEOTIDE SEQUENCE [LARGE SCALE GENOMIC DNA]</scope>
    <source>
        <strain>ATCC BAA-138 / DSM 3043 / CIP 106854 / NCIMB 13768 / 1H11</strain>
    </source>
</reference>
<proteinExistence type="inferred from homology"/>
<sequence length="108" mass="11959">MMKGGMGNLMKQAQEMQEKMQKIQEEIAETEVTGEAGAGMIKVTMNGRHDVSRVNVDPSVMEEDKELLEDLLAAAVNDAVRKVEETSRGRMEEATEGMNLPPGFKMPF</sequence>
<dbReference type="EMBL" id="CP000285">
    <property type="protein sequence ID" value="ABE58812.1"/>
    <property type="molecule type" value="Genomic_DNA"/>
</dbReference>
<dbReference type="RefSeq" id="WP_011506758.1">
    <property type="nucleotide sequence ID" value="NC_007963.1"/>
</dbReference>
<dbReference type="SMR" id="Q1QXJ6"/>
<dbReference type="STRING" id="290398.Csal_1459"/>
<dbReference type="GeneID" id="95334186"/>
<dbReference type="KEGG" id="csa:Csal_1459"/>
<dbReference type="eggNOG" id="COG0718">
    <property type="taxonomic scope" value="Bacteria"/>
</dbReference>
<dbReference type="HOGENOM" id="CLU_140930_0_0_6"/>
<dbReference type="OrthoDB" id="9808738at2"/>
<dbReference type="Proteomes" id="UP000000239">
    <property type="component" value="Chromosome"/>
</dbReference>
<dbReference type="GO" id="GO:0043590">
    <property type="term" value="C:bacterial nucleoid"/>
    <property type="evidence" value="ECO:0007669"/>
    <property type="project" value="UniProtKB-UniRule"/>
</dbReference>
<dbReference type="GO" id="GO:0005829">
    <property type="term" value="C:cytosol"/>
    <property type="evidence" value="ECO:0007669"/>
    <property type="project" value="TreeGrafter"/>
</dbReference>
<dbReference type="GO" id="GO:0003677">
    <property type="term" value="F:DNA binding"/>
    <property type="evidence" value="ECO:0007669"/>
    <property type="project" value="UniProtKB-UniRule"/>
</dbReference>
<dbReference type="FunFam" id="3.30.1310.10:FF:000001">
    <property type="entry name" value="Nucleoid-associated protein YbaB"/>
    <property type="match status" value="1"/>
</dbReference>
<dbReference type="Gene3D" id="3.30.1310.10">
    <property type="entry name" value="Nucleoid-associated protein YbaB-like domain"/>
    <property type="match status" value="1"/>
</dbReference>
<dbReference type="HAMAP" id="MF_00274">
    <property type="entry name" value="DNA_YbaB_EbfC"/>
    <property type="match status" value="1"/>
</dbReference>
<dbReference type="InterPro" id="IPR036894">
    <property type="entry name" value="YbaB-like_sf"/>
</dbReference>
<dbReference type="InterPro" id="IPR004401">
    <property type="entry name" value="YbaB/EbfC"/>
</dbReference>
<dbReference type="NCBIfam" id="TIGR00103">
    <property type="entry name" value="DNA_YbaB_EbfC"/>
    <property type="match status" value="1"/>
</dbReference>
<dbReference type="PANTHER" id="PTHR33449">
    <property type="entry name" value="NUCLEOID-ASSOCIATED PROTEIN YBAB"/>
    <property type="match status" value="1"/>
</dbReference>
<dbReference type="PANTHER" id="PTHR33449:SF1">
    <property type="entry name" value="NUCLEOID-ASSOCIATED PROTEIN YBAB"/>
    <property type="match status" value="1"/>
</dbReference>
<dbReference type="Pfam" id="PF02575">
    <property type="entry name" value="YbaB_DNA_bd"/>
    <property type="match status" value="1"/>
</dbReference>
<dbReference type="PIRSF" id="PIRSF004555">
    <property type="entry name" value="UCP004555"/>
    <property type="match status" value="1"/>
</dbReference>
<dbReference type="SUPFAM" id="SSF82607">
    <property type="entry name" value="YbaB-like"/>
    <property type="match status" value="1"/>
</dbReference>
<comment type="function">
    <text evidence="1">Binds to DNA and alters its conformation. May be involved in regulation of gene expression, nucleoid organization and DNA protection.</text>
</comment>
<comment type="subunit">
    <text evidence="1">Homodimer.</text>
</comment>
<comment type="subcellular location">
    <subcellularLocation>
        <location evidence="1">Cytoplasm</location>
        <location evidence="1">Nucleoid</location>
    </subcellularLocation>
</comment>
<comment type="similarity">
    <text evidence="1">Belongs to the YbaB/EbfC family.</text>
</comment>
<evidence type="ECO:0000255" key="1">
    <source>
        <dbReference type="HAMAP-Rule" id="MF_00274"/>
    </source>
</evidence>
<evidence type="ECO:0000256" key="2">
    <source>
        <dbReference type="SAM" id="MobiDB-lite"/>
    </source>
</evidence>